<gene>
    <name type="ORF">GA27866</name>
</gene>
<name>NO66_DROPS</name>
<keyword id="KW-0156">Chromatin regulator</keyword>
<keyword id="KW-0223">Dioxygenase</keyword>
<keyword id="KW-0408">Iron</keyword>
<keyword id="KW-0479">Metal-binding</keyword>
<keyword id="KW-0539">Nucleus</keyword>
<keyword id="KW-0560">Oxidoreductase</keyword>
<keyword id="KW-0597">Phosphoprotein</keyword>
<keyword id="KW-1185">Reference proteome</keyword>
<keyword id="KW-0678">Repressor</keyword>
<keyword id="KW-0804">Transcription</keyword>
<keyword id="KW-0805">Transcription regulation</keyword>
<organism>
    <name type="scientific">Drosophila pseudoobscura pseudoobscura</name>
    <name type="common">Fruit fly</name>
    <dbReference type="NCBI Taxonomy" id="46245"/>
    <lineage>
        <taxon>Eukaryota</taxon>
        <taxon>Metazoa</taxon>
        <taxon>Ecdysozoa</taxon>
        <taxon>Arthropoda</taxon>
        <taxon>Hexapoda</taxon>
        <taxon>Insecta</taxon>
        <taxon>Pterygota</taxon>
        <taxon>Neoptera</taxon>
        <taxon>Endopterygota</taxon>
        <taxon>Diptera</taxon>
        <taxon>Brachycera</taxon>
        <taxon>Muscomorpha</taxon>
        <taxon>Ephydroidea</taxon>
        <taxon>Drosophilidae</taxon>
        <taxon>Drosophila</taxon>
        <taxon>Sophophora</taxon>
    </lineage>
</organism>
<reference key="1">
    <citation type="journal article" date="2005" name="Genome Res.">
        <title>Comparative genome sequencing of Drosophila pseudoobscura: chromosomal, gene, and cis-element evolution.</title>
        <authorList>
            <person name="Richards S."/>
            <person name="Liu Y."/>
            <person name="Bettencourt B.R."/>
            <person name="Hradecky P."/>
            <person name="Letovsky S."/>
            <person name="Nielsen R."/>
            <person name="Thornton K."/>
            <person name="Hubisz M.J."/>
            <person name="Chen R."/>
            <person name="Meisel R.P."/>
            <person name="Couronne O."/>
            <person name="Hua S."/>
            <person name="Smith M.A."/>
            <person name="Zhang P."/>
            <person name="Liu J."/>
            <person name="Bussemaker H.J."/>
            <person name="van Batenburg M.F."/>
            <person name="Howells S.L."/>
            <person name="Scherer S.E."/>
            <person name="Sodergren E."/>
            <person name="Matthews B.B."/>
            <person name="Crosby M.A."/>
            <person name="Schroeder A.J."/>
            <person name="Ortiz-Barrientos D."/>
            <person name="Rives C.M."/>
            <person name="Metzker M.L."/>
            <person name="Muzny D.M."/>
            <person name="Scott G."/>
            <person name="Steffen D."/>
            <person name="Wheeler D.A."/>
            <person name="Worley K.C."/>
            <person name="Havlak P."/>
            <person name="Durbin K.J."/>
            <person name="Egan A."/>
            <person name="Gill R."/>
            <person name="Hume J."/>
            <person name="Morgan M.B."/>
            <person name="Miner G."/>
            <person name="Hamilton C."/>
            <person name="Huang Y."/>
            <person name="Waldron L."/>
            <person name="Verduzco D."/>
            <person name="Clerc-Blankenburg K.P."/>
            <person name="Dubchak I."/>
            <person name="Noor M.A.F."/>
            <person name="Anderson W."/>
            <person name="White K.P."/>
            <person name="Clark A.G."/>
            <person name="Schaeffer S.W."/>
            <person name="Gelbart W.M."/>
            <person name="Weinstock G.M."/>
            <person name="Gibbs R.A."/>
        </authorList>
    </citation>
    <scope>NUCLEOTIDE SEQUENCE [LARGE SCALE GENOMIC DNA]</scope>
    <source>
        <strain>MV2-25 / Tucson 14011-0121.94</strain>
    </source>
</reference>
<protein>
    <recommendedName>
        <fullName>Bifunctional lysine-specific demethylase and histidyl-hydroxylase NO66</fullName>
        <ecNumber>1.14.11.-</ecNumber>
        <ecNumber>1.14.11.27</ecNumber>
    </recommendedName>
    <alternativeName>
        <fullName>Histone lysine demethylase NO66</fullName>
    </alternativeName>
</protein>
<proteinExistence type="inferred from homology"/>
<accession>B5DUH6</accession>
<dbReference type="EC" id="1.14.11.-"/>
<dbReference type="EC" id="1.14.11.27"/>
<dbReference type="EMBL" id="CH673738">
    <property type="protein sequence ID" value="EDY71541.1"/>
    <property type="molecule type" value="Genomic_DNA"/>
</dbReference>
<dbReference type="SMR" id="B5DUH6"/>
<dbReference type="FunCoup" id="B5DUH6">
    <property type="interactions" value="1952"/>
</dbReference>
<dbReference type="eggNOG" id="KOG3706">
    <property type="taxonomic scope" value="Eukaryota"/>
</dbReference>
<dbReference type="HOGENOM" id="CLU_013645_2_1_1"/>
<dbReference type="InParanoid" id="B5DUH6"/>
<dbReference type="Proteomes" id="UP000001819">
    <property type="component" value="Unplaced"/>
</dbReference>
<dbReference type="GO" id="GO:0005730">
    <property type="term" value="C:nucleolus"/>
    <property type="evidence" value="ECO:0007669"/>
    <property type="project" value="TreeGrafter"/>
</dbReference>
<dbReference type="GO" id="GO:0005634">
    <property type="term" value="C:nucleus"/>
    <property type="evidence" value="ECO:0000250"/>
    <property type="project" value="UniProtKB"/>
</dbReference>
<dbReference type="GO" id="GO:0016706">
    <property type="term" value="F:2-oxoglutarate-dependent dioxygenase activity"/>
    <property type="evidence" value="ECO:0000250"/>
    <property type="project" value="UniProtKB"/>
</dbReference>
<dbReference type="GO" id="GO:0051864">
    <property type="term" value="F:histone H3K36 demethylase activity"/>
    <property type="evidence" value="ECO:0000250"/>
    <property type="project" value="UniProtKB"/>
</dbReference>
<dbReference type="GO" id="GO:0140680">
    <property type="term" value="F:histone H3K36me/H3K36me2 demethylase activity"/>
    <property type="evidence" value="ECO:0007669"/>
    <property type="project" value="UniProtKB-EC"/>
</dbReference>
<dbReference type="GO" id="GO:0034647">
    <property type="term" value="F:histone H3K4me/H3K4me2/H3K4me3 demethylase activity"/>
    <property type="evidence" value="ECO:0000250"/>
    <property type="project" value="UniProtKB"/>
</dbReference>
<dbReference type="GO" id="GO:0005506">
    <property type="term" value="F:iron ion binding"/>
    <property type="evidence" value="ECO:0000250"/>
    <property type="project" value="UniProtKB"/>
</dbReference>
<dbReference type="GO" id="GO:0045892">
    <property type="term" value="P:negative regulation of DNA-templated transcription"/>
    <property type="evidence" value="ECO:0000250"/>
    <property type="project" value="UniProtKB"/>
</dbReference>
<dbReference type="FunFam" id="2.60.120.650:FF:000013">
    <property type="entry name" value="Ribosomal oxygenase 1"/>
    <property type="match status" value="1"/>
</dbReference>
<dbReference type="FunFam" id="1.10.10.1500:FF:000001">
    <property type="entry name" value="ribosomal oxygenase 1 isoform X1"/>
    <property type="match status" value="1"/>
</dbReference>
<dbReference type="FunFam" id="3.90.930.40:FF:000001">
    <property type="entry name" value="ribosomal oxygenase 1 isoform X1"/>
    <property type="match status" value="1"/>
</dbReference>
<dbReference type="Gene3D" id="3.90.930.40">
    <property type="match status" value="1"/>
</dbReference>
<dbReference type="Gene3D" id="2.60.120.650">
    <property type="entry name" value="Cupin"/>
    <property type="match status" value="1"/>
</dbReference>
<dbReference type="Gene3D" id="1.10.10.1500">
    <property type="entry name" value="JmjC domain-containing ribosomal oxygenase (ROX), dimer domain"/>
    <property type="match status" value="1"/>
</dbReference>
<dbReference type="InterPro" id="IPR003347">
    <property type="entry name" value="JmjC_dom"/>
</dbReference>
<dbReference type="InterPro" id="IPR039994">
    <property type="entry name" value="NO66-like"/>
</dbReference>
<dbReference type="InterPro" id="IPR049043">
    <property type="entry name" value="RIOX1/NO66-like_C_WH"/>
</dbReference>
<dbReference type="PANTHER" id="PTHR13096">
    <property type="entry name" value="MINA53 MYC INDUCED NUCLEAR ANTIGEN"/>
    <property type="match status" value="1"/>
</dbReference>
<dbReference type="PANTHER" id="PTHR13096:SF8">
    <property type="entry name" value="RIBOSOMAL OXYGENASE 1"/>
    <property type="match status" value="1"/>
</dbReference>
<dbReference type="Pfam" id="PF08007">
    <property type="entry name" value="JmjC_2"/>
    <property type="match status" value="1"/>
</dbReference>
<dbReference type="Pfam" id="PF21233">
    <property type="entry name" value="RIOX1_C_WH"/>
    <property type="match status" value="1"/>
</dbReference>
<dbReference type="SUPFAM" id="SSF51197">
    <property type="entry name" value="Clavaminate synthase-like"/>
    <property type="match status" value="1"/>
</dbReference>
<dbReference type="PROSITE" id="PS51184">
    <property type="entry name" value="JMJC"/>
    <property type="match status" value="1"/>
</dbReference>
<comment type="function">
    <text evidence="1">Oxygenase that can act as both a histone lysine demethylase and a ribosomal histidine hydroxylase. Specifically demethylates 'Lys-4' (H3K4me) and 'Lys-36' (H3K36me) of histone H3, thereby playing a central role in histone code (By similarity).</text>
</comment>
<comment type="catalytic activity">
    <reaction>
        <text>N(6),N(6)-dimethyl-L-lysyl(36)-[histone H3] + 2 2-oxoglutarate + 2 O2 = L-lysyl(36)-[histone H3] + 2 formaldehyde + 2 succinate + 2 CO2</text>
        <dbReference type="Rhea" id="RHEA:42032"/>
        <dbReference type="Rhea" id="RHEA-COMP:9785"/>
        <dbReference type="Rhea" id="RHEA-COMP:9787"/>
        <dbReference type="ChEBI" id="CHEBI:15379"/>
        <dbReference type="ChEBI" id="CHEBI:16526"/>
        <dbReference type="ChEBI" id="CHEBI:16810"/>
        <dbReference type="ChEBI" id="CHEBI:16842"/>
        <dbReference type="ChEBI" id="CHEBI:29969"/>
        <dbReference type="ChEBI" id="CHEBI:30031"/>
        <dbReference type="ChEBI" id="CHEBI:61976"/>
        <dbReference type="EC" id="1.14.11.27"/>
    </reaction>
</comment>
<comment type="cofactor">
    <cofactor evidence="1">
        <name>Fe(2+)</name>
        <dbReference type="ChEBI" id="CHEBI:29033"/>
    </cofactor>
    <text evidence="1">Binds 1 Fe(2+) ion per subunit.</text>
</comment>
<comment type="subcellular location">
    <subcellularLocation>
        <location evidence="1">Nucleus</location>
    </subcellularLocation>
</comment>
<comment type="similarity">
    <text evidence="4">Belongs to the ROX family. NO66 subfamily.</text>
</comment>
<feature type="chain" id="PRO_0000390989" description="Bifunctional lysine-specific demethylase and histidyl-hydroxylase NO66">
    <location>
        <begin position="1"/>
        <end position="946"/>
    </location>
</feature>
<feature type="domain" description="JmjC" evidence="2">
    <location>
        <begin position="606"/>
        <end position="742"/>
    </location>
</feature>
<feature type="region of interest" description="Disordered" evidence="3">
    <location>
        <begin position="14"/>
        <end position="435"/>
    </location>
</feature>
<feature type="compositionally biased region" description="Polar residues" evidence="3">
    <location>
        <begin position="17"/>
        <end position="28"/>
    </location>
</feature>
<feature type="compositionally biased region" description="Polar residues" evidence="3">
    <location>
        <begin position="37"/>
        <end position="46"/>
    </location>
</feature>
<feature type="compositionally biased region" description="Low complexity" evidence="3">
    <location>
        <begin position="59"/>
        <end position="73"/>
    </location>
</feature>
<feature type="compositionally biased region" description="Polar residues" evidence="3">
    <location>
        <begin position="99"/>
        <end position="110"/>
    </location>
</feature>
<feature type="compositionally biased region" description="Basic and acidic residues" evidence="3">
    <location>
        <begin position="117"/>
        <end position="128"/>
    </location>
</feature>
<feature type="compositionally biased region" description="Polar residues" evidence="3">
    <location>
        <begin position="169"/>
        <end position="186"/>
    </location>
</feature>
<feature type="compositionally biased region" description="Basic and acidic residues" evidence="3">
    <location>
        <begin position="187"/>
        <end position="198"/>
    </location>
</feature>
<feature type="compositionally biased region" description="Polar residues" evidence="3">
    <location>
        <begin position="239"/>
        <end position="256"/>
    </location>
</feature>
<feature type="compositionally biased region" description="Basic and acidic residues" evidence="3">
    <location>
        <begin position="257"/>
        <end position="268"/>
    </location>
</feature>
<feature type="compositionally biased region" description="Polar residues" evidence="3">
    <location>
        <begin position="309"/>
        <end position="327"/>
    </location>
</feature>
<feature type="compositionally biased region" description="Basic and acidic residues" evidence="3">
    <location>
        <begin position="328"/>
        <end position="338"/>
    </location>
</feature>
<feature type="compositionally biased region" description="Polar residues" evidence="3">
    <location>
        <begin position="379"/>
        <end position="397"/>
    </location>
</feature>
<feature type="compositionally biased region" description="Basic and acidic residues" evidence="3">
    <location>
        <begin position="398"/>
        <end position="408"/>
    </location>
</feature>
<feature type="compositionally biased region" description="Polar residues" evidence="3">
    <location>
        <begin position="416"/>
        <end position="433"/>
    </location>
</feature>
<feature type="binding site" evidence="2">
    <location>
        <position position="646"/>
    </location>
    <ligand>
        <name>Fe cation</name>
        <dbReference type="ChEBI" id="CHEBI:24875"/>
        <note>catalytic</note>
    </ligand>
</feature>
<feature type="binding site" evidence="2">
    <location>
        <position position="648"/>
    </location>
    <ligand>
        <name>Fe cation</name>
        <dbReference type="ChEBI" id="CHEBI:24875"/>
        <note>catalytic</note>
    </ligand>
</feature>
<feature type="binding site" evidence="2">
    <location>
        <position position="708"/>
    </location>
    <ligand>
        <name>Fe cation</name>
        <dbReference type="ChEBI" id="CHEBI:24875"/>
        <note>catalytic</note>
    </ligand>
</feature>
<feature type="modified residue" description="Phosphothreonine" evidence="1">
    <location>
        <position position="309"/>
    </location>
</feature>
<feature type="modified residue" description="Phosphoserine" evidence="1">
    <location>
        <position position="339"/>
    </location>
</feature>
<sequence length="946" mass="104618">MFDKNKKVSVFAAYRGSATSKNYVQKGTKNFDKNGAAKNNNRNLASKNGGKLKGPLKRSGSYSDGDNGSSSSSGEDEEDDSTDSRGELYDSSESGEEYTLNNHSSQSSPETPAYTRESLKRRNDEAEGSKPIGAKRTSSTPVGQKDEEDDSTDSNGELYDSSESGEEYTLNSHSSQSSPETPANTRESLKRRTDEAEGSKPIGAKRTSSTPVGQKDEEDDSTDSSGELYDSSESGEEYTLNSHSYQSSPETPANTRESLKRRTDEAEGSKPIGAKRTSSTPVGQKDEEDDSTDSSGELYDSSESGEEYTLNSHSSQSSPETPANTRESLNRRNYEAEGSKPIGAKRTSSTPVGQKDEEDDSTDSSGELYDSSESGEEYTLNSHSSQSSPETPANTRESLNRRNYEAEGSKPIGAKRTSSTPVGQSTSAASKKNTVPVKVEVASPNRALLSPQSIEMEPGDSMFCRIKIGVIKSVQPGGDVGAEAGAGQAVNRLEPCHEVHKENSIEVGKRTLAQLIAPMTMATFLRDHWEKSPFRVITTTSGGFSNLISFKMIDKMLIQNHVEYTTNIDVTSYEDGVRKTLNPDGRALPPSVWAHYQRGCSIRILNPSSYLVQLRQLCVKLQEFFHCLVGANVYLTPPESQGFAPHYDDIEAFVLQVEGKKRWRIYAPTKELPRESSGNLSQTELGDPIMDIVLMPGDLLYFPRGWIHQAITEKDSHSLHITLSAYQQQSYANLMEKLMPLVVKESVEQTLKLRKGLPLDIFQNLGVANAEWNGVHRQKLIQHIQNLAQRLMPTEGQIDRALDQLAIKFQHEALPPTIAPQELKRTVYGAQATADKTGHCSLDYELAEGTAVRLLRANIVRLTVDEGVLRCYYYTDNGLEYCKYEPNFFELEPFHGTVIETLIHAYPDYTKIKDLPPMGNDEDRLEFVEALWERGILMVEKPFKKV</sequence>
<evidence type="ECO:0000250" key="1"/>
<evidence type="ECO:0000255" key="2">
    <source>
        <dbReference type="PROSITE-ProRule" id="PRU00538"/>
    </source>
</evidence>
<evidence type="ECO:0000256" key="3">
    <source>
        <dbReference type="SAM" id="MobiDB-lite"/>
    </source>
</evidence>
<evidence type="ECO:0000305" key="4"/>